<comment type="function">
    <text evidence="2">Catalyzes the interconversion of L-alanine and D-alanine. Provides the D-alanine required for cell wall biosynthesis.</text>
</comment>
<comment type="catalytic activity">
    <reaction evidence="2">
        <text>L-alanine = D-alanine</text>
        <dbReference type="Rhea" id="RHEA:20249"/>
        <dbReference type="ChEBI" id="CHEBI:57416"/>
        <dbReference type="ChEBI" id="CHEBI:57972"/>
        <dbReference type="EC" id="5.1.1.1"/>
    </reaction>
</comment>
<comment type="cofactor">
    <cofactor evidence="1">
        <name>pyridoxal 5'-phosphate</name>
        <dbReference type="ChEBI" id="CHEBI:597326"/>
    </cofactor>
</comment>
<comment type="biophysicochemical properties">
    <kinetics>
        <KM evidence="2">1.1 mM for D-alanine</KM>
        <KM evidence="2">1.1 mM for L-alanine</KM>
        <Vmax evidence="2">40.0 umol/min/mg enzyme toward D-alanine</Vmax>
        <Vmax evidence="2">44.0 umol/min/mg enzyme toward L-alanine</Vmax>
    </kinetics>
</comment>
<comment type="pathway">
    <text>Amino-acid biosynthesis; D-alanine biosynthesis; D-alanine from L-alanine: step 1/1.</text>
</comment>
<comment type="pathway">
    <text>Cell wall biogenesis; peptidoglycan biosynthesis.</text>
</comment>
<comment type="similarity">
    <text evidence="3">Belongs to the alanine racemase family.</text>
</comment>
<reference key="1">
    <citation type="journal article" date="2000" name="Curr. Microbiol.">
        <title>Characterization of the alanine racemases from Pseudomonas aeruginosa PAO1.</title>
        <authorList>
            <person name="Strych U."/>
            <person name="Huang H.-C."/>
            <person name="Krause K.L."/>
            <person name="Benedik M.J."/>
        </authorList>
    </citation>
    <scope>NUCLEOTIDE SEQUENCE [GENOMIC DNA]</scope>
    <scope>FUNCTION</scope>
    <scope>CATALYTIC ACTIVITY</scope>
    <scope>BIOPHYSICOCHEMICAL PROPERTIES</scope>
    <source>
        <strain>ATCC 15692 / DSM 22644 / CIP 104116 / JCM 14847 / LMG 12228 / 1C / PRS 101 / PAO1</strain>
    </source>
</reference>
<reference key="2">
    <citation type="journal article" date="2000" name="Nature">
        <title>Complete genome sequence of Pseudomonas aeruginosa PAO1, an opportunistic pathogen.</title>
        <authorList>
            <person name="Stover C.K."/>
            <person name="Pham X.-Q.T."/>
            <person name="Erwin A.L."/>
            <person name="Mizoguchi S.D."/>
            <person name="Warrener P."/>
            <person name="Hickey M.J."/>
            <person name="Brinkman F.S.L."/>
            <person name="Hufnagle W.O."/>
            <person name="Kowalik D.J."/>
            <person name="Lagrou M."/>
            <person name="Garber R.L."/>
            <person name="Goltry L."/>
            <person name="Tolentino E."/>
            <person name="Westbrock-Wadman S."/>
            <person name="Yuan Y."/>
            <person name="Brody L.L."/>
            <person name="Coulter S.N."/>
            <person name="Folger K.R."/>
            <person name="Kas A."/>
            <person name="Larbig K."/>
            <person name="Lim R.M."/>
            <person name="Smith K.A."/>
            <person name="Spencer D.H."/>
            <person name="Wong G.K.-S."/>
            <person name="Wu Z."/>
            <person name="Paulsen I.T."/>
            <person name="Reizer J."/>
            <person name="Saier M.H. Jr."/>
            <person name="Hancock R.E.W."/>
            <person name="Lory S."/>
            <person name="Olson M.V."/>
        </authorList>
    </citation>
    <scope>NUCLEOTIDE SEQUENCE [LARGE SCALE GENOMIC DNA]</scope>
    <source>
        <strain>ATCC 15692 / DSM 22644 / CIP 104116 / JCM 14847 / LMG 12228 / 1C / PRS 101 / PAO1</strain>
    </source>
</reference>
<accession>Q9HUN4</accession>
<accession>Q9S418</accession>
<name>ALR1_PSEAE</name>
<organism>
    <name type="scientific">Pseudomonas aeruginosa (strain ATCC 15692 / DSM 22644 / CIP 104116 / JCM 14847 / LMG 12228 / 1C / PRS 101 / PAO1)</name>
    <dbReference type="NCBI Taxonomy" id="208964"/>
    <lineage>
        <taxon>Bacteria</taxon>
        <taxon>Pseudomonadati</taxon>
        <taxon>Pseudomonadota</taxon>
        <taxon>Gammaproteobacteria</taxon>
        <taxon>Pseudomonadales</taxon>
        <taxon>Pseudomonadaceae</taxon>
        <taxon>Pseudomonas</taxon>
    </lineage>
</organism>
<dbReference type="EC" id="5.1.1.1"/>
<dbReference type="EMBL" id="AF165882">
    <property type="protein sequence ID" value="AAD47082.1"/>
    <property type="molecule type" value="Genomic_DNA"/>
</dbReference>
<dbReference type="EMBL" id="AE004091">
    <property type="protein sequence ID" value="AAG08315.1"/>
    <property type="molecule type" value="Genomic_DNA"/>
</dbReference>
<dbReference type="PIR" id="D83029">
    <property type="entry name" value="D83029"/>
</dbReference>
<dbReference type="RefSeq" id="NP_253617.1">
    <property type="nucleotide sequence ID" value="NC_002516.2"/>
</dbReference>
<dbReference type="RefSeq" id="WP_003112284.1">
    <property type="nucleotide sequence ID" value="NZ_QZGE01000002.1"/>
</dbReference>
<dbReference type="PDB" id="6A2F">
    <property type="method" value="X-ray"/>
    <property type="resolution" value="2.50 A"/>
    <property type="chains" value="A/B=1-358"/>
</dbReference>
<dbReference type="PDBsum" id="6A2F"/>
<dbReference type="SMR" id="Q9HUN4"/>
<dbReference type="FunCoup" id="Q9HUN4">
    <property type="interactions" value="387"/>
</dbReference>
<dbReference type="STRING" id="208964.PA4930"/>
<dbReference type="PaxDb" id="208964-PA4930"/>
<dbReference type="DNASU" id="878646"/>
<dbReference type="GeneID" id="878646"/>
<dbReference type="KEGG" id="pae:PA4930"/>
<dbReference type="PATRIC" id="fig|208964.12.peg.5163"/>
<dbReference type="PseudoCAP" id="PA4930"/>
<dbReference type="HOGENOM" id="CLU_028393_1_0_6"/>
<dbReference type="InParanoid" id="Q9HUN4"/>
<dbReference type="OrthoDB" id="9813814at2"/>
<dbReference type="PhylomeDB" id="Q9HUN4"/>
<dbReference type="BioCyc" id="PAER208964:G1FZ6-5044-MONOMER"/>
<dbReference type="BRENDA" id="5.1.1.1">
    <property type="organism ID" value="5087"/>
</dbReference>
<dbReference type="SABIO-RK" id="Q9HUN4"/>
<dbReference type="UniPathway" id="UPA00042">
    <property type="reaction ID" value="UER00497"/>
</dbReference>
<dbReference type="UniPathway" id="UPA00219"/>
<dbReference type="Proteomes" id="UP000002438">
    <property type="component" value="Chromosome"/>
</dbReference>
<dbReference type="GO" id="GO:0005829">
    <property type="term" value="C:cytosol"/>
    <property type="evidence" value="ECO:0000318"/>
    <property type="project" value="GO_Central"/>
</dbReference>
<dbReference type="GO" id="GO:0008784">
    <property type="term" value="F:alanine racemase activity"/>
    <property type="evidence" value="ECO:0000314"/>
    <property type="project" value="PseudoCAP"/>
</dbReference>
<dbReference type="GO" id="GO:0030170">
    <property type="term" value="F:pyridoxal phosphate binding"/>
    <property type="evidence" value="ECO:0000318"/>
    <property type="project" value="GO_Central"/>
</dbReference>
<dbReference type="GO" id="GO:0071555">
    <property type="term" value="P:cell wall organization"/>
    <property type="evidence" value="ECO:0007669"/>
    <property type="project" value="UniProtKB-KW"/>
</dbReference>
<dbReference type="GO" id="GO:0030632">
    <property type="term" value="P:D-alanine biosynthetic process"/>
    <property type="evidence" value="ECO:0000318"/>
    <property type="project" value="GO_Central"/>
</dbReference>
<dbReference type="GO" id="GO:0009252">
    <property type="term" value="P:peptidoglycan biosynthetic process"/>
    <property type="evidence" value="ECO:0007669"/>
    <property type="project" value="UniProtKB-UniPathway"/>
</dbReference>
<dbReference type="GO" id="GO:0008360">
    <property type="term" value="P:regulation of cell shape"/>
    <property type="evidence" value="ECO:0007669"/>
    <property type="project" value="UniProtKB-KW"/>
</dbReference>
<dbReference type="CDD" id="cd06827">
    <property type="entry name" value="PLPDE_III_AR_proteobact"/>
    <property type="match status" value="1"/>
</dbReference>
<dbReference type="FunFam" id="2.40.37.10:FF:000002">
    <property type="entry name" value="Alanine racemase"/>
    <property type="match status" value="1"/>
</dbReference>
<dbReference type="FunFam" id="3.20.20.10:FF:000002">
    <property type="entry name" value="Alanine racemase"/>
    <property type="match status" value="1"/>
</dbReference>
<dbReference type="Gene3D" id="3.20.20.10">
    <property type="entry name" value="Alanine racemase"/>
    <property type="match status" value="1"/>
</dbReference>
<dbReference type="Gene3D" id="2.40.37.10">
    <property type="entry name" value="Lyase, Ornithine Decarboxylase, Chain A, domain 1"/>
    <property type="match status" value="1"/>
</dbReference>
<dbReference type="HAMAP" id="MF_01201">
    <property type="entry name" value="Ala_racemase"/>
    <property type="match status" value="1"/>
</dbReference>
<dbReference type="InterPro" id="IPR000821">
    <property type="entry name" value="Ala_racemase"/>
</dbReference>
<dbReference type="InterPro" id="IPR009006">
    <property type="entry name" value="Ala_racemase/Decarboxylase_C"/>
</dbReference>
<dbReference type="InterPro" id="IPR011079">
    <property type="entry name" value="Ala_racemase_C"/>
</dbReference>
<dbReference type="InterPro" id="IPR001608">
    <property type="entry name" value="Ala_racemase_N"/>
</dbReference>
<dbReference type="InterPro" id="IPR020622">
    <property type="entry name" value="Ala_racemase_pyridoxalP-BS"/>
</dbReference>
<dbReference type="InterPro" id="IPR029066">
    <property type="entry name" value="PLP-binding_barrel"/>
</dbReference>
<dbReference type="NCBIfam" id="TIGR00492">
    <property type="entry name" value="alr"/>
    <property type="match status" value="1"/>
</dbReference>
<dbReference type="PANTHER" id="PTHR30511">
    <property type="entry name" value="ALANINE RACEMASE"/>
    <property type="match status" value="1"/>
</dbReference>
<dbReference type="PANTHER" id="PTHR30511:SF0">
    <property type="entry name" value="ALANINE RACEMASE, CATABOLIC-RELATED"/>
    <property type="match status" value="1"/>
</dbReference>
<dbReference type="Pfam" id="PF00842">
    <property type="entry name" value="Ala_racemase_C"/>
    <property type="match status" value="1"/>
</dbReference>
<dbReference type="Pfam" id="PF01168">
    <property type="entry name" value="Ala_racemase_N"/>
    <property type="match status" value="1"/>
</dbReference>
<dbReference type="PRINTS" id="PR00992">
    <property type="entry name" value="ALARACEMASE"/>
</dbReference>
<dbReference type="SMART" id="SM01005">
    <property type="entry name" value="Ala_racemase_C"/>
    <property type="match status" value="1"/>
</dbReference>
<dbReference type="SUPFAM" id="SSF50621">
    <property type="entry name" value="Alanine racemase C-terminal domain-like"/>
    <property type="match status" value="1"/>
</dbReference>
<dbReference type="SUPFAM" id="SSF51419">
    <property type="entry name" value="PLP-binding barrel"/>
    <property type="match status" value="1"/>
</dbReference>
<dbReference type="PROSITE" id="PS00395">
    <property type="entry name" value="ALANINE_RACEMASE"/>
    <property type="match status" value="1"/>
</dbReference>
<protein>
    <recommendedName>
        <fullName>Alanine racemase, biosynthetic</fullName>
        <ecNumber>5.1.1.1</ecNumber>
    </recommendedName>
</protein>
<evidence type="ECO:0000250" key="1"/>
<evidence type="ECO:0000269" key="2">
    <source>
    </source>
</evidence>
<evidence type="ECO:0000305" key="3"/>
<evidence type="ECO:0007829" key="4">
    <source>
        <dbReference type="PDB" id="6A2F"/>
    </source>
</evidence>
<sequence length="358" mass="38311">MRPLVATVDLSAIRHNYALAKRCAPQRQAFAVVKANAYGHGAREVVTALHDDADGFAVACLEEAAEVRALHASARILLLEGCFEASEYALAGQLRLDLVIQGAEQGEAFLAAGLDIPLNVWLKLDSGMHRLGFDPAALRAWHARLRSHPGVRELNLISHFACADERNHPLTEQQLESFLGLLDLDFDQRSLANSAAVLTIPAAHMDWLRPGIMLYGSTPLADLSAAELGLKPAMSLGAQLISLREVAVGESVGYGATWIAERPARIGTVSCGYADGYPRTAPAGTPVLVGGRRAILAGRVSMDMLAVDLSDLPEARVGDPVELWGAGLSVDEVARACGTLGYELLSKVTARVPRRYSH</sequence>
<feature type="chain" id="PRO_0000114546" description="Alanine racemase, biosynthetic">
    <location>
        <begin position="1"/>
        <end position="358"/>
    </location>
</feature>
<feature type="active site" description="Proton acceptor; specific for D-alanine" evidence="1">
    <location>
        <position position="34"/>
    </location>
</feature>
<feature type="active site" description="Proton acceptor; specific for L-alanine" evidence="1">
    <location>
        <position position="254"/>
    </location>
</feature>
<feature type="binding site" evidence="1">
    <location>
        <position position="130"/>
    </location>
    <ligand>
        <name>substrate</name>
    </ligand>
</feature>
<feature type="binding site" evidence="1">
    <location>
        <position position="302"/>
    </location>
    <ligand>
        <name>substrate</name>
    </ligand>
</feature>
<feature type="modified residue" description="N6-(pyridoxal phosphate)lysine" evidence="1">
    <location>
        <position position="34"/>
    </location>
</feature>
<feature type="sequence conflict" description="In Ref. 1; AAD47082." evidence="3" ref="1">
    <original>S</original>
    <variation>N</variation>
    <location>
        <position position="147"/>
    </location>
</feature>
<feature type="sequence conflict" description="In Ref. 1; AAD47082." evidence="3" ref="1">
    <original>I</original>
    <variation>L</variation>
    <location>
        <position position="295"/>
    </location>
</feature>
<feature type="strand" evidence="4">
    <location>
        <begin position="3"/>
        <end position="8"/>
    </location>
</feature>
<feature type="helix" evidence="4">
    <location>
        <begin position="10"/>
        <end position="22"/>
    </location>
</feature>
<feature type="strand" evidence="4">
    <location>
        <begin position="27"/>
        <end position="32"/>
    </location>
</feature>
<feature type="turn" evidence="4">
    <location>
        <begin position="36"/>
        <end position="40"/>
    </location>
</feature>
<feature type="helix" evidence="4">
    <location>
        <begin position="42"/>
        <end position="48"/>
    </location>
</feature>
<feature type="turn" evidence="4">
    <location>
        <begin position="49"/>
        <end position="52"/>
    </location>
</feature>
<feature type="strand" evidence="4">
    <location>
        <begin position="54"/>
        <end position="60"/>
    </location>
</feature>
<feature type="helix" evidence="4">
    <location>
        <begin position="61"/>
        <end position="70"/>
    </location>
</feature>
<feature type="strand" evidence="4">
    <location>
        <begin position="72"/>
        <end position="78"/>
    </location>
</feature>
<feature type="helix" evidence="4">
    <location>
        <begin position="87"/>
        <end position="93"/>
    </location>
</feature>
<feature type="strand" evidence="4">
    <location>
        <begin position="97"/>
        <end position="100"/>
    </location>
</feature>
<feature type="helix" evidence="4">
    <location>
        <begin position="103"/>
        <end position="112"/>
    </location>
</feature>
<feature type="strand" evidence="4">
    <location>
        <begin position="118"/>
        <end position="124"/>
    </location>
</feature>
<feature type="strand" evidence="4">
    <location>
        <begin position="126"/>
        <end position="128"/>
    </location>
</feature>
<feature type="strand" evidence="4">
    <location>
        <begin position="130"/>
        <end position="133"/>
    </location>
</feature>
<feature type="helix" evidence="4">
    <location>
        <begin position="135"/>
        <end position="145"/>
    </location>
</feature>
<feature type="strand" evidence="4">
    <location>
        <begin position="151"/>
        <end position="157"/>
    </location>
</feature>
<feature type="strand" evidence="4">
    <location>
        <begin position="165"/>
        <end position="167"/>
    </location>
</feature>
<feature type="helix" evidence="4">
    <location>
        <begin position="169"/>
        <end position="179"/>
    </location>
</feature>
<feature type="turn" evidence="4">
    <location>
        <begin position="180"/>
        <end position="183"/>
    </location>
</feature>
<feature type="helix" evidence="4">
    <location>
        <begin position="194"/>
        <end position="199"/>
    </location>
</feature>
<feature type="helix" evidence="4">
    <location>
        <begin position="201"/>
        <end position="203"/>
    </location>
</feature>
<feature type="strand" evidence="4">
    <location>
        <begin position="206"/>
        <end position="208"/>
    </location>
</feature>
<feature type="helix" evidence="4">
    <location>
        <begin position="212"/>
        <end position="215"/>
    </location>
</feature>
<feature type="strand" evidence="4">
    <location>
        <begin position="221"/>
        <end position="223"/>
    </location>
</feature>
<feature type="turn" evidence="4">
    <location>
        <begin position="225"/>
        <end position="229"/>
    </location>
</feature>
<feature type="strand" evidence="4">
    <location>
        <begin position="234"/>
        <end position="246"/>
    </location>
</feature>
<feature type="strand" evidence="4">
    <location>
        <begin position="251"/>
        <end position="253"/>
    </location>
</feature>
<feature type="helix" evidence="4">
    <location>
        <begin position="254"/>
        <end position="256"/>
    </location>
</feature>
<feature type="strand" evidence="4">
    <location>
        <begin position="261"/>
        <end position="270"/>
    </location>
</feature>
<feature type="helix" evidence="4">
    <location>
        <begin position="273"/>
        <end position="275"/>
    </location>
</feature>
<feature type="strand" evidence="4">
    <location>
        <begin position="286"/>
        <end position="289"/>
    </location>
</feature>
<feature type="strand" evidence="4">
    <location>
        <begin position="292"/>
        <end position="296"/>
    </location>
</feature>
<feature type="strand" evidence="4">
    <location>
        <begin position="305"/>
        <end position="308"/>
    </location>
</feature>
<feature type="strand" evidence="4">
    <location>
        <begin position="320"/>
        <end position="328"/>
    </location>
</feature>
<feature type="helix" evidence="4">
    <location>
        <begin position="330"/>
        <end position="336"/>
    </location>
</feature>
<feature type="helix" evidence="4">
    <location>
        <begin position="341"/>
        <end position="346"/>
    </location>
</feature>
<feature type="strand" evidence="4">
    <location>
        <begin position="354"/>
        <end position="356"/>
    </location>
</feature>
<keyword id="KW-0002">3D-structure</keyword>
<keyword id="KW-0133">Cell shape</keyword>
<keyword id="KW-0961">Cell wall biogenesis/degradation</keyword>
<keyword id="KW-0413">Isomerase</keyword>
<keyword id="KW-0573">Peptidoglycan synthesis</keyword>
<keyword id="KW-0663">Pyridoxal phosphate</keyword>
<keyword id="KW-1185">Reference proteome</keyword>
<proteinExistence type="evidence at protein level"/>
<gene>
    <name type="primary">alr</name>
    <name type="ordered locus">PA4930</name>
</gene>